<reference key="1">
    <citation type="journal article" date="2003" name="Nature">
        <title>Genome divergence in two Prochlorococcus ecotypes reflects oceanic niche differentiation.</title>
        <authorList>
            <person name="Rocap G."/>
            <person name="Larimer F.W."/>
            <person name="Lamerdin J.E."/>
            <person name="Malfatti S."/>
            <person name="Chain P."/>
            <person name="Ahlgren N.A."/>
            <person name="Arellano A."/>
            <person name="Coleman M."/>
            <person name="Hauser L."/>
            <person name="Hess W.R."/>
            <person name="Johnson Z.I."/>
            <person name="Land M.L."/>
            <person name="Lindell D."/>
            <person name="Post A.F."/>
            <person name="Regala W."/>
            <person name="Shah M."/>
            <person name="Shaw S.L."/>
            <person name="Steglich C."/>
            <person name="Sullivan M.B."/>
            <person name="Ting C.S."/>
            <person name="Tolonen A."/>
            <person name="Webb E.A."/>
            <person name="Zinser E.R."/>
            <person name="Chisholm S.W."/>
        </authorList>
    </citation>
    <scope>NUCLEOTIDE SEQUENCE [LARGE SCALE GENOMIC DNA]</scope>
    <source>
        <strain>CCMP1986 / NIES-2087 / MED4</strain>
    </source>
</reference>
<protein>
    <recommendedName>
        <fullName evidence="1">Ribosome-binding factor A</fullName>
    </recommendedName>
</protein>
<organism>
    <name type="scientific">Prochlorococcus marinus subsp. pastoris (strain CCMP1986 / NIES-2087 / MED4)</name>
    <dbReference type="NCBI Taxonomy" id="59919"/>
    <lineage>
        <taxon>Bacteria</taxon>
        <taxon>Bacillati</taxon>
        <taxon>Cyanobacteriota</taxon>
        <taxon>Cyanophyceae</taxon>
        <taxon>Synechococcales</taxon>
        <taxon>Prochlorococcaceae</taxon>
        <taxon>Prochlorococcus</taxon>
    </lineage>
</organism>
<name>RBFA_PROMP</name>
<feature type="chain" id="PRO_0000102712" description="Ribosome-binding factor A">
    <location>
        <begin position="1"/>
        <end position="132"/>
    </location>
</feature>
<keyword id="KW-0963">Cytoplasm</keyword>
<keyword id="KW-0690">Ribosome biogenesis</keyword>
<evidence type="ECO:0000255" key="1">
    <source>
        <dbReference type="HAMAP-Rule" id="MF_00003"/>
    </source>
</evidence>
<dbReference type="EMBL" id="BX548174">
    <property type="protein sequence ID" value="CAE18571.1"/>
    <property type="molecule type" value="Genomic_DNA"/>
</dbReference>
<dbReference type="RefSeq" id="WP_011131751.1">
    <property type="nucleotide sequence ID" value="NC_005072.1"/>
</dbReference>
<dbReference type="SMR" id="Q7V3G3"/>
<dbReference type="STRING" id="59919.PMM0112"/>
<dbReference type="KEGG" id="pmm:PMM0112"/>
<dbReference type="eggNOG" id="COG0858">
    <property type="taxonomic scope" value="Bacteria"/>
</dbReference>
<dbReference type="HOGENOM" id="CLU_089475_2_1_3"/>
<dbReference type="OrthoDB" id="307788at2"/>
<dbReference type="Proteomes" id="UP000001026">
    <property type="component" value="Chromosome"/>
</dbReference>
<dbReference type="GO" id="GO:0005829">
    <property type="term" value="C:cytosol"/>
    <property type="evidence" value="ECO:0007669"/>
    <property type="project" value="TreeGrafter"/>
</dbReference>
<dbReference type="GO" id="GO:0043024">
    <property type="term" value="F:ribosomal small subunit binding"/>
    <property type="evidence" value="ECO:0007669"/>
    <property type="project" value="TreeGrafter"/>
</dbReference>
<dbReference type="GO" id="GO:0030490">
    <property type="term" value="P:maturation of SSU-rRNA"/>
    <property type="evidence" value="ECO:0007669"/>
    <property type="project" value="UniProtKB-UniRule"/>
</dbReference>
<dbReference type="Gene3D" id="3.30.300.20">
    <property type="match status" value="1"/>
</dbReference>
<dbReference type="HAMAP" id="MF_00003">
    <property type="entry name" value="RbfA"/>
    <property type="match status" value="1"/>
</dbReference>
<dbReference type="InterPro" id="IPR015946">
    <property type="entry name" value="KH_dom-like_a/b"/>
</dbReference>
<dbReference type="InterPro" id="IPR000238">
    <property type="entry name" value="RbfA"/>
</dbReference>
<dbReference type="InterPro" id="IPR023799">
    <property type="entry name" value="RbfA_dom_sf"/>
</dbReference>
<dbReference type="InterPro" id="IPR020053">
    <property type="entry name" value="Ribosome-bd_factorA_CS"/>
</dbReference>
<dbReference type="NCBIfam" id="TIGR00082">
    <property type="entry name" value="rbfA"/>
    <property type="match status" value="1"/>
</dbReference>
<dbReference type="PANTHER" id="PTHR33515">
    <property type="entry name" value="RIBOSOME-BINDING FACTOR A, CHLOROPLASTIC-RELATED"/>
    <property type="match status" value="1"/>
</dbReference>
<dbReference type="PANTHER" id="PTHR33515:SF1">
    <property type="entry name" value="RIBOSOME-BINDING FACTOR A, CHLOROPLASTIC-RELATED"/>
    <property type="match status" value="1"/>
</dbReference>
<dbReference type="Pfam" id="PF02033">
    <property type="entry name" value="RBFA"/>
    <property type="match status" value="1"/>
</dbReference>
<dbReference type="SUPFAM" id="SSF89919">
    <property type="entry name" value="Ribosome-binding factor A, RbfA"/>
    <property type="match status" value="1"/>
</dbReference>
<dbReference type="PROSITE" id="PS01319">
    <property type="entry name" value="RBFA"/>
    <property type="match status" value="1"/>
</dbReference>
<gene>
    <name evidence="1" type="primary">rbfA</name>
    <name type="ordered locus">PMM0112</name>
</gene>
<accession>Q7V3G3</accession>
<proteinExistence type="inferred from homology"/>
<comment type="function">
    <text evidence="1">One of several proteins that assist in the late maturation steps of the functional core of the 30S ribosomal subunit. Associates with free 30S ribosomal subunits (but not with 30S subunits that are part of 70S ribosomes or polysomes). Required for efficient processing of 16S rRNA. May interact with the 5'-terminal helix region of 16S rRNA.</text>
</comment>
<comment type="subunit">
    <text evidence="1">Monomer. Binds 30S ribosomal subunits, but not 50S ribosomal subunits or 70S ribosomes.</text>
</comment>
<comment type="subcellular location">
    <subcellularLocation>
        <location evidence="1">Cytoplasm</location>
    </subcellularLocation>
</comment>
<comment type="similarity">
    <text evidence="1">Belongs to the RbfA family.</text>
</comment>
<sequence>MPNNYRIAKISSLLKKEITLILQNDLENDLLRSNFINISKIELSGDLQFCKIYITSTAEEAIRKEIVEELNLAKTYIRHTLGQRIEMRRVPEMTFKDDTVLEKGLSVLKLLAELKNKKHNQDSKVEGNNKNV</sequence>